<feature type="chain" id="PRO_0000308453" description="Processive diacylglycerol beta-glucosyltransferase">
    <location>
        <begin position="1"/>
        <end position="391"/>
    </location>
</feature>
<accession>Q2FI60</accession>
<comment type="function">
    <text evidence="1">Processive glucosyltransferase involved in the biosynthesis of both the bilayer- and non-bilayer-forming membrane glucolipids. Is able to successively transfer two glucosyl residues to diacylglycerol (DAG), thereby catalyzing the formation of beta-monoglucosyl-DAG (3-O-(beta-D-glucopyranosyl)-1,2-diacyl-sn-glycerol) and beta-diglucosyl-DAG (3-O-(beta-D-glucopyranosyl-beta-(1-&gt;6)-D-glucopyranosyl)-1,2-diacyl-sn-glycerol). Beta-diglucosyl-DAG is the predominant glycolipid found in Bacillales and is also used as a membrane anchor for lipoteichoic acid (LTA).</text>
</comment>
<comment type="catalytic activity">
    <reaction>
        <text>a 1,2-diacyl-3-O-(beta-D-glucopyranosyl)-sn-glycerol + UDP-alpha-D-glucose = a 1,2-diacyl-3-O-(beta-D-Glc-(1-&gt;6)-beta-D-Glc)-sn-glycerol + UDP + H(+)</text>
        <dbReference type="Rhea" id="RHEA:39031"/>
        <dbReference type="ChEBI" id="CHEBI:15378"/>
        <dbReference type="ChEBI" id="CHEBI:58223"/>
        <dbReference type="ChEBI" id="CHEBI:58885"/>
        <dbReference type="ChEBI" id="CHEBI:75799"/>
        <dbReference type="ChEBI" id="CHEBI:76264"/>
        <dbReference type="EC" id="2.4.1.315"/>
    </reaction>
</comment>
<comment type="catalytic activity">
    <reaction evidence="1">
        <text>a 1,2-diacyl-sn-glycerol + UDP-alpha-D-glucose = a 1,2-diacyl-3-O-(beta-D-glucopyranosyl)-sn-glycerol + UDP + H(+)</text>
        <dbReference type="Rhea" id="RHEA:17285"/>
        <dbReference type="ChEBI" id="CHEBI:15378"/>
        <dbReference type="ChEBI" id="CHEBI:17815"/>
        <dbReference type="ChEBI" id="CHEBI:58223"/>
        <dbReference type="ChEBI" id="CHEBI:58885"/>
        <dbReference type="ChEBI" id="CHEBI:75799"/>
    </reaction>
</comment>
<comment type="pathway">
    <text evidence="1">Glycolipid metabolism; diglucosyl-diacylglycerol biosynthesis.</text>
</comment>
<comment type="subcellular location">
    <subcellularLocation>
        <location evidence="1">Cell membrane</location>
    </subcellularLocation>
</comment>
<comment type="similarity">
    <text evidence="1">Belongs to the glycosyltransferase 28 family. UgtP subfamily.</text>
</comment>
<dbReference type="EC" id="2.4.1.315"/>
<dbReference type="EMBL" id="CP000255">
    <property type="protein sequence ID" value="ABD21520.1"/>
    <property type="molecule type" value="Genomic_DNA"/>
</dbReference>
<dbReference type="RefSeq" id="WP_000258650.1">
    <property type="nucleotide sequence ID" value="NZ_CP027476.1"/>
</dbReference>
<dbReference type="SMR" id="Q2FI60"/>
<dbReference type="KEGG" id="saa:SAUSA300_0918"/>
<dbReference type="HOGENOM" id="CLU_028367_0_1_9"/>
<dbReference type="OMA" id="IHPYWIN"/>
<dbReference type="UniPathway" id="UPA00894"/>
<dbReference type="Proteomes" id="UP000001939">
    <property type="component" value="Chromosome"/>
</dbReference>
<dbReference type="GO" id="GO:0005886">
    <property type="term" value="C:plasma membrane"/>
    <property type="evidence" value="ECO:0007669"/>
    <property type="project" value="UniProtKB-SubCell"/>
</dbReference>
<dbReference type="GO" id="GO:0047228">
    <property type="term" value="F:1,2-diacylglycerol 3-glucosyltransferase activity"/>
    <property type="evidence" value="ECO:0007669"/>
    <property type="project" value="UniProtKB-UniRule"/>
</dbReference>
<dbReference type="GO" id="GO:0009246">
    <property type="term" value="P:enterobacterial common antigen biosynthetic process"/>
    <property type="evidence" value="ECO:0007669"/>
    <property type="project" value="UniProtKB-UniPathway"/>
</dbReference>
<dbReference type="GO" id="GO:0009247">
    <property type="term" value="P:glycolipid biosynthetic process"/>
    <property type="evidence" value="ECO:0007669"/>
    <property type="project" value="UniProtKB-UniRule"/>
</dbReference>
<dbReference type="GO" id="GO:0070395">
    <property type="term" value="P:lipoteichoic acid biosynthetic process"/>
    <property type="evidence" value="ECO:0007669"/>
    <property type="project" value="UniProtKB-UniRule"/>
</dbReference>
<dbReference type="CDD" id="cd17507">
    <property type="entry name" value="GT28_Beta-DGS-like"/>
    <property type="match status" value="1"/>
</dbReference>
<dbReference type="Gene3D" id="3.40.50.2000">
    <property type="entry name" value="Glycogen Phosphorylase B"/>
    <property type="match status" value="2"/>
</dbReference>
<dbReference type="HAMAP" id="MF_01280">
    <property type="entry name" value="Diacylglyc_glucosyltr"/>
    <property type="match status" value="1"/>
</dbReference>
<dbReference type="InterPro" id="IPR009695">
    <property type="entry name" value="Diacylglyc_glucosyltr_N"/>
</dbReference>
<dbReference type="InterPro" id="IPR007235">
    <property type="entry name" value="Glyco_trans_28_C"/>
</dbReference>
<dbReference type="InterPro" id="IPR050519">
    <property type="entry name" value="Glycosyltransf_28_UgtP"/>
</dbReference>
<dbReference type="InterPro" id="IPR023589">
    <property type="entry name" value="Pro_diacylglycrl_glcsylTrfase"/>
</dbReference>
<dbReference type="NCBIfam" id="NF010134">
    <property type="entry name" value="PRK13608.1"/>
    <property type="match status" value="1"/>
</dbReference>
<dbReference type="PANTHER" id="PTHR43025">
    <property type="entry name" value="MONOGALACTOSYLDIACYLGLYCEROL SYNTHASE"/>
    <property type="match status" value="1"/>
</dbReference>
<dbReference type="PANTHER" id="PTHR43025:SF3">
    <property type="entry name" value="MONOGALACTOSYLDIACYLGLYCEROL SYNTHASE 1, CHLOROPLASTIC"/>
    <property type="match status" value="1"/>
</dbReference>
<dbReference type="Pfam" id="PF04101">
    <property type="entry name" value="Glyco_tran_28_C"/>
    <property type="match status" value="1"/>
</dbReference>
<dbReference type="Pfam" id="PF06925">
    <property type="entry name" value="MGDG_synth"/>
    <property type="match status" value="1"/>
</dbReference>
<dbReference type="SUPFAM" id="SSF53756">
    <property type="entry name" value="UDP-Glycosyltransferase/glycogen phosphorylase"/>
    <property type="match status" value="1"/>
</dbReference>
<organism>
    <name type="scientific">Staphylococcus aureus (strain USA300)</name>
    <dbReference type="NCBI Taxonomy" id="367830"/>
    <lineage>
        <taxon>Bacteria</taxon>
        <taxon>Bacillati</taxon>
        <taxon>Bacillota</taxon>
        <taxon>Bacilli</taxon>
        <taxon>Bacillales</taxon>
        <taxon>Staphylococcaceae</taxon>
        <taxon>Staphylococcus</taxon>
    </lineage>
</organism>
<protein>
    <recommendedName>
        <fullName evidence="1">Processive diacylglycerol beta-glucosyltransferase</fullName>
        <ecNumber>2.4.1.315</ecNumber>
    </recommendedName>
    <alternativeName>
        <fullName evidence="1">Beta-diglucosyldiacylglycerol synthase</fullName>
        <shortName evidence="1">Beta-DGS</shortName>
        <shortName evidence="1">DGlcDAG synthase</shortName>
        <shortName evidence="1">Glc2-DAG synthase</shortName>
    </alternativeName>
    <alternativeName>
        <fullName evidence="1">Beta-gentiobiosyldiacylglycerol synthase</fullName>
    </alternativeName>
    <alternativeName>
        <fullName evidence="1">Beta-monoglucosyldiacylglycerol synthase</fullName>
        <shortName evidence="1">Beta-MGS</shortName>
        <shortName evidence="1">MGlcDAG synthase</shortName>
    </alternativeName>
    <alternativeName>
        <fullName>Diglucosyl diacylglycerol synthase (1,6-linking)</fullName>
    </alternativeName>
    <alternativeName>
        <fullName evidence="1">Glucosyl-beta-1,6-glucosyldiacylglycerol synthase</fullName>
    </alternativeName>
    <alternativeName>
        <fullName evidence="1">UDP glucosyltransferase</fullName>
    </alternativeName>
    <alternativeName>
        <fullName evidence="1">UDP-glucose:1,2-diacylglycerol-3-beta-D-glucosyltransferase</fullName>
    </alternativeName>
</protein>
<keyword id="KW-0119">Carbohydrate metabolism</keyword>
<keyword id="KW-1003">Cell membrane</keyword>
<keyword id="KW-0328">Glycosyltransferase</keyword>
<keyword id="KW-0444">Lipid biosynthesis</keyword>
<keyword id="KW-0443">Lipid metabolism</keyword>
<keyword id="KW-0472">Membrane</keyword>
<keyword id="KW-0808">Transferase</keyword>
<evidence type="ECO:0000255" key="1">
    <source>
        <dbReference type="HAMAP-Rule" id="MF_01280"/>
    </source>
</evidence>
<sequence length="391" mass="44548">MVTQNKKILIITGSFGNGHMQVTQSIVNQLNDMNLDHLSVIEHDLFMEAHPILTSICKKWYINSFKYFRNMYKGFYYSRPDKLDKCFYKYYGLNKLINLLIKEKPDLILLTFPTPVMSVLTEQFNINIPVATVMTDYRLHKNWITPYSTRYYVATKETKQDFIDVGIDPSTVKVTGIPIDNKFETPINQKQWLIDNNLDPDKQTILMSAGAFGVSKGFDTMITDILAKSANAQVVMICGKSKELKRSLTAKFKSNENVLILGYTKHMNEWMASSQLMITKPGGITITEGFARCIPMIFLNPAPGQELENALYFEEKGFGKIADTPEEAIKIVASLTNGNEQLTNMISTMEQDKIKYATQTICRDLLDLIGHSSQPQEIYGKVPLYARFFVK</sequence>
<proteinExistence type="inferred from homology"/>
<name>UGTP_STAA3</name>
<gene>
    <name evidence="1" type="primary">ugtP</name>
    <name type="ordered locus">SAUSA300_0918</name>
</gene>
<reference key="1">
    <citation type="journal article" date="2006" name="Lancet">
        <title>Complete genome sequence of USA300, an epidemic clone of community-acquired meticillin-resistant Staphylococcus aureus.</title>
        <authorList>
            <person name="Diep B.A."/>
            <person name="Gill S.R."/>
            <person name="Chang R.F."/>
            <person name="Phan T.H."/>
            <person name="Chen J.H."/>
            <person name="Davidson M.G."/>
            <person name="Lin F."/>
            <person name="Lin J."/>
            <person name="Carleton H.A."/>
            <person name="Mongodin E.F."/>
            <person name="Sensabaugh G.F."/>
            <person name="Perdreau-Remington F."/>
        </authorList>
    </citation>
    <scope>NUCLEOTIDE SEQUENCE [LARGE SCALE GENOMIC DNA]</scope>
    <source>
        <strain>USA300</strain>
    </source>
</reference>